<reference key="1">
    <citation type="journal article" date="2003" name="Nature">
        <title>Genome divergence in two Prochlorococcus ecotypes reflects oceanic niche differentiation.</title>
        <authorList>
            <person name="Rocap G."/>
            <person name="Larimer F.W."/>
            <person name="Lamerdin J.E."/>
            <person name="Malfatti S."/>
            <person name="Chain P."/>
            <person name="Ahlgren N.A."/>
            <person name="Arellano A."/>
            <person name="Coleman M."/>
            <person name="Hauser L."/>
            <person name="Hess W.R."/>
            <person name="Johnson Z.I."/>
            <person name="Land M.L."/>
            <person name="Lindell D."/>
            <person name="Post A.F."/>
            <person name="Regala W."/>
            <person name="Shah M."/>
            <person name="Shaw S.L."/>
            <person name="Steglich C."/>
            <person name="Sullivan M.B."/>
            <person name="Ting C.S."/>
            <person name="Tolonen A."/>
            <person name="Webb E.A."/>
            <person name="Zinser E.R."/>
            <person name="Chisholm S.W."/>
        </authorList>
    </citation>
    <scope>NUCLEOTIDE SEQUENCE [LARGE SCALE GENOMIC DNA]</scope>
    <source>
        <strain>MIT 9313</strain>
    </source>
</reference>
<reference key="2">
    <citation type="journal article" date="2010" name="Proc. Natl. Acad. Sci. U.S.A.">
        <title>Catalytic promiscuity in the biosynthesis of cyclic peptide secondary metabolites in planktonic marine cyanobacteria.</title>
        <authorList>
            <person name="Li B."/>
            <person name="Sher D."/>
            <person name="Kelly L."/>
            <person name="Shi Y."/>
            <person name="Huang K."/>
            <person name="Knerr P.J."/>
            <person name="Joewono I."/>
            <person name="Rusch D."/>
            <person name="Chisholm S.W."/>
            <person name="van der Donk W.A."/>
        </authorList>
    </citation>
    <scope>LANTHIONINE CROSS-LINKS</scope>
    <scope>DEHYDRATION AT THR-69 AND THR-73</scope>
    <scope>INDUCTION BY NITROGEN STARVATION</scope>
    <source>
        <strain>MIT 9313</strain>
    </source>
</reference>
<reference key="3">
    <citation type="journal article" date="2012" name="Biochemistry">
        <title>Structural characterization of four prochlorosins: a novel class of lantipeptides produced by planktonic marine cyanobacteria.</title>
        <authorList>
            <person name="Tang W."/>
            <person name="van der Donk W.A."/>
        </authorList>
    </citation>
    <scope>STRUCTURE BY NMR OF 69-90</scope>
    <scope>DEHYDRATION AT THR-69 AND THR-73</scope>
    <scope>LANTHIONINE CROSS-LINKS</scope>
    <scope>EXPRESSION IN E.COLI</scope>
    <source>
        <strain>MIT 9313</strain>
    </source>
</reference>
<evidence type="ECO:0000250" key="1">
    <source>
        <dbReference type="UniProtKB" id="H2A7G5"/>
    </source>
</evidence>
<evidence type="ECO:0000250" key="2">
    <source>
        <dbReference type="UniProtKB" id="Q7V8T1"/>
    </source>
</evidence>
<evidence type="ECO:0000269" key="3">
    <source>
    </source>
</evidence>
<evidence type="ECO:0000269" key="4">
    <source>
    </source>
</evidence>
<evidence type="ECO:0000303" key="5">
    <source>
    </source>
</evidence>
<evidence type="ECO:0000303" key="6">
    <source>
    </source>
</evidence>
<evidence type="ECO:0000305" key="7"/>
<evidence type="ECO:0000305" key="8">
    <source>
    </source>
</evidence>
<evidence type="ECO:0000305" key="9">
    <source>
    </source>
</evidence>
<evidence type="ECO:0000312" key="10">
    <source>
        <dbReference type="EMBL" id="CAE20414.1"/>
    </source>
</evidence>
<sequence>MSEEQLKAFIAKVQADTSLQEQLKVEGADVVAIAKASGFAITTEDLKAHQANSQKNLSDAELEGVAGGTIGGTIVSITCETCDLLVGKMC</sequence>
<proteinExistence type="evidence at protein level"/>
<dbReference type="EMBL" id="BX548175">
    <property type="protein sequence ID" value="CAE20414.1"/>
    <property type="status" value="ALT_INIT"/>
    <property type="molecule type" value="Genomic_DNA"/>
</dbReference>
<dbReference type="RefSeq" id="WP_041384871.1">
    <property type="nucleotide sequence ID" value="NC_005071.1"/>
</dbReference>
<dbReference type="SMR" id="Q7TV59"/>
<dbReference type="KEGG" id="pmt:PMT_0239"/>
<dbReference type="HOGENOM" id="CLU_158613_2_0_3"/>
<dbReference type="OrthoDB" id="542288at2"/>
<dbReference type="Proteomes" id="UP000001423">
    <property type="component" value="Chromosome"/>
</dbReference>
<dbReference type="GO" id="GO:0005576">
    <property type="term" value="C:extracellular region"/>
    <property type="evidence" value="ECO:0007669"/>
    <property type="project" value="UniProtKB-SubCell"/>
</dbReference>
<dbReference type="InterPro" id="IPR022516">
    <property type="entry name" value="CHP03798_Ocin"/>
</dbReference>
<dbReference type="InterPro" id="IPR012903">
    <property type="entry name" value="Nif11"/>
</dbReference>
<dbReference type="NCBIfam" id="TIGR03798">
    <property type="entry name" value="leader_Nif11"/>
    <property type="match status" value="1"/>
</dbReference>
<dbReference type="Pfam" id="PF07862">
    <property type="entry name" value="Nif11"/>
    <property type="match status" value="1"/>
</dbReference>
<name>LAN17_PROMM</name>
<keyword id="KW-1185">Reference proteome</keyword>
<keyword id="KW-0964">Secreted</keyword>
<keyword id="KW-0883">Thioether bond</keyword>
<accession>Q7TV59</accession>
<comment type="function">
    <text evidence="2 7 8 9">Lanthionine-containing peptide (lantipeptide) with unknown function (Probable). Does not show antibiotic activity against Lactococcus lactis 117 and Bacillus subtilis 6633 bacteria (By similarity). Organisms that produce this peptide live in oligotrophic environments at very dilute concentrations, suggesting this peptide is not secreted to influence other bacteria (Probable).</text>
</comment>
<comment type="subcellular location">
    <subcellularLocation>
        <location evidence="7">Secreted</location>
    </subcellularLocation>
</comment>
<comment type="induction">
    <text evidence="3">Down-regulated under nitrogen starvation.</text>
</comment>
<comment type="PTM">
    <text evidence="4">Cross-links are proved in vitro, when coepressed in E.coli with the ProcM lanthionine synthetase.</text>
</comment>
<comment type="PTM">
    <text evidence="4">The lanthionine residue has a DL configuration (with 2S,6R stereochemistry), whereas the beta-methyllanthionine residues have a DL configuration (with 2S,3S,6R stereochemistry).</text>
</comment>
<comment type="PTM">
    <text evidence="1 9">Maturation of prochlorosin involves the enzymatic conversion of Thr, and Ser into dehydrated AA and the formation of thioether bonds with cysteines. This is followed by membrane translocation and cleavage of the modified precursor.</text>
</comment>
<comment type="sequence caution" evidence="9">
    <conflict type="erroneous initiation">
        <sequence resource="EMBL-CDS" id="CAE20414"/>
    </conflict>
    <text>Truncated N-terminus.</text>
</comment>
<gene>
    <name evidence="5 6" type="primary">ProcA1.7</name>
    <name evidence="10" type="ordered locus">PMT_0239</name>
</gene>
<protein>
    <recommendedName>
        <fullName evidence="5 6">Lantipeptide prochlorosin 1.7</fullName>
        <shortName evidence="5 6">Lantipeptide Pcn1.7</shortName>
    </recommendedName>
</protein>
<organism>
    <name type="scientific">Prochlorococcus marinus (strain MIT 9313)</name>
    <dbReference type="NCBI Taxonomy" id="74547"/>
    <lineage>
        <taxon>Bacteria</taxon>
        <taxon>Bacillati</taxon>
        <taxon>Cyanobacteriota</taxon>
        <taxon>Cyanophyceae</taxon>
        <taxon>Synechococcales</taxon>
        <taxon>Prochlorococcaceae</taxon>
        <taxon>Prochlorococcus</taxon>
    </lineage>
</organism>
<feature type="propeptide" id="PRO_0000450373" evidence="8 9">
    <location>
        <begin position="1"/>
        <end position="68"/>
    </location>
</feature>
<feature type="peptide" id="PRO_0000450374" description="Lantipeptide prochlorosin 1.7" evidence="8 9">
    <location>
        <begin position="69"/>
        <end position="90"/>
    </location>
</feature>
<feature type="modified residue" description="2,3-didehydrobutyrine" evidence="3 4">
    <location>
        <position position="69"/>
    </location>
</feature>
<feature type="modified residue" description="2,3-didehydrobutyrine" evidence="3 4">
    <location>
        <position position="73"/>
    </location>
</feature>
<feature type="cross-link" description="Lanthionine (Ser-Cys)" evidence="4 8">
    <location>
        <begin position="76"/>
        <end position="79"/>
    </location>
</feature>
<feature type="cross-link" description="Beta-methyllanthionine (Thr-Cys)" evidence="4 8">
    <location>
        <begin position="78"/>
        <end position="82"/>
    </location>
</feature>
<feature type="cross-link" description="Beta-methyllanthionine (Thr-Cys)" evidence="4 8">
    <location>
        <begin position="81"/>
        <end position="90"/>
    </location>
</feature>